<feature type="chain" id="PRO_1000008124" description="Thiamine-phosphate synthase">
    <location>
        <begin position="1"/>
        <end position="219"/>
    </location>
</feature>
<feature type="binding site" evidence="1">
    <location>
        <begin position="44"/>
        <end position="48"/>
    </location>
    <ligand>
        <name>4-amino-2-methyl-5-(diphosphooxymethyl)pyrimidine</name>
        <dbReference type="ChEBI" id="CHEBI:57841"/>
    </ligand>
</feature>
<feature type="binding site" evidence="1">
    <location>
        <position position="79"/>
    </location>
    <ligand>
        <name>4-amino-2-methyl-5-(diphosphooxymethyl)pyrimidine</name>
        <dbReference type="ChEBI" id="CHEBI:57841"/>
    </ligand>
</feature>
<feature type="binding site" evidence="1">
    <location>
        <position position="80"/>
    </location>
    <ligand>
        <name>Mg(2+)</name>
        <dbReference type="ChEBI" id="CHEBI:18420"/>
    </ligand>
</feature>
<feature type="binding site" evidence="1">
    <location>
        <position position="99"/>
    </location>
    <ligand>
        <name>Mg(2+)</name>
        <dbReference type="ChEBI" id="CHEBI:18420"/>
    </ligand>
</feature>
<feature type="binding site" evidence="1">
    <location>
        <position position="117"/>
    </location>
    <ligand>
        <name>4-amino-2-methyl-5-(diphosphooxymethyl)pyrimidine</name>
        <dbReference type="ChEBI" id="CHEBI:57841"/>
    </ligand>
</feature>
<feature type="binding site" evidence="1">
    <location>
        <begin position="143"/>
        <end position="145"/>
    </location>
    <ligand>
        <name>2-[(2R,5Z)-2-carboxy-4-methylthiazol-5(2H)-ylidene]ethyl phosphate</name>
        <dbReference type="ChEBI" id="CHEBI:62899"/>
    </ligand>
</feature>
<feature type="binding site" evidence="1">
    <location>
        <position position="146"/>
    </location>
    <ligand>
        <name>4-amino-2-methyl-5-(diphosphooxymethyl)pyrimidine</name>
        <dbReference type="ChEBI" id="CHEBI:57841"/>
    </ligand>
</feature>
<feature type="binding site" evidence="1">
    <location>
        <position position="175"/>
    </location>
    <ligand>
        <name>2-[(2R,5Z)-2-carboxy-4-methylthiazol-5(2H)-ylidene]ethyl phosphate</name>
        <dbReference type="ChEBI" id="CHEBI:62899"/>
    </ligand>
</feature>
<feature type="binding site" evidence="1">
    <location>
        <begin position="195"/>
        <end position="196"/>
    </location>
    <ligand>
        <name>2-[(2R,5Z)-2-carboxy-4-methylthiazol-5(2H)-ylidene]ethyl phosphate</name>
        <dbReference type="ChEBI" id="CHEBI:62899"/>
    </ligand>
</feature>
<name>THIE_BACCZ</name>
<sequence>MSRISKAEMSKLLSVYFIMGSNNCTKDPLQVLREALEGGITIFQFREKGEGALTGEERICFAKELQAICKEYGVPFIVNDDVELALELDADGVHVGQDDEGITSVREKMGDKIIGVSTHTIEEARWAIENGADYLGVGPIFPTSTKKDTKAVQGTKGLAHFREQGITIPIVGIGGISIENTASVIEAGADGISVISAISLAESAYESTKKLVEEVSKSL</sequence>
<comment type="function">
    <text evidence="1">Condenses 4-methyl-5-(beta-hydroxyethyl)thiazole monophosphate (THZ-P) and 2-methyl-4-amino-5-hydroxymethyl pyrimidine pyrophosphate (HMP-PP) to form thiamine monophosphate (TMP).</text>
</comment>
<comment type="catalytic activity">
    <reaction evidence="1">
        <text>2-[(2R,5Z)-2-carboxy-4-methylthiazol-5(2H)-ylidene]ethyl phosphate + 4-amino-2-methyl-5-(diphosphooxymethyl)pyrimidine + 2 H(+) = thiamine phosphate + CO2 + diphosphate</text>
        <dbReference type="Rhea" id="RHEA:47844"/>
        <dbReference type="ChEBI" id="CHEBI:15378"/>
        <dbReference type="ChEBI" id="CHEBI:16526"/>
        <dbReference type="ChEBI" id="CHEBI:33019"/>
        <dbReference type="ChEBI" id="CHEBI:37575"/>
        <dbReference type="ChEBI" id="CHEBI:57841"/>
        <dbReference type="ChEBI" id="CHEBI:62899"/>
        <dbReference type="EC" id="2.5.1.3"/>
    </reaction>
</comment>
<comment type="catalytic activity">
    <reaction evidence="1">
        <text>2-(2-carboxy-4-methylthiazol-5-yl)ethyl phosphate + 4-amino-2-methyl-5-(diphosphooxymethyl)pyrimidine + 2 H(+) = thiamine phosphate + CO2 + diphosphate</text>
        <dbReference type="Rhea" id="RHEA:47848"/>
        <dbReference type="ChEBI" id="CHEBI:15378"/>
        <dbReference type="ChEBI" id="CHEBI:16526"/>
        <dbReference type="ChEBI" id="CHEBI:33019"/>
        <dbReference type="ChEBI" id="CHEBI:37575"/>
        <dbReference type="ChEBI" id="CHEBI:57841"/>
        <dbReference type="ChEBI" id="CHEBI:62890"/>
        <dbReference type="EC" id="2.5.1.3"/>
    </reaction>
</comment>
<comment type="catalytic activity">
    <reaction evidence="1">
        <text>4-methyl-5-(2-phosphooxyethyl)-thiazole + 4-amino-2-methyl-5-(diphosphooxymethyl)pyrimidine + H(+) = thiamine phosphate + diphosphate</text>
        <dbReference type="Rhea" id="RHEA:22328"/>
        <dbReference type="ChEBI" id="CHEBI:15378"/>
        <dbReference type="ChEBI" id="CHEBI:33019"/>
        <dbReference type="ChEBI" id="CHEBI:37575"/>
        <dbReference type="ChEBI" id="CHEBI:57841"/>
        <dbReference type="ChEBI" id="CHEBI:58296"/>
        <dbReference type="EC" id="2.5.1.3"/>
    </reaction>
</comment>
<comment type="cofactor">
    <cofactor evidence="1">
        <name>Mg(2+)</name>
        <dbReference type="ChEBI" id="CHEBI:18420"/>
    </cofactor>
    <text evidence="1">Binds 1 Mg(2+) ion per subunit.</text>
</comment>
<comment type="pathway">
    <text evidence="1">Cofactor biosynthesis; thiamine diphosphate biosynthesis; thiamine phosphate from 4-amino-2-methyl-5-diphosphomethylpyrimidine and 4-methyl-5-(2-phosphoethyl)-thiazole: step 1/1.</text>
</comment>
<comment type="similarity">
    <text evidence="1">Belongs to the thiamine-phosphate synthase family.</text>
</comment>
<proteinExistence type="inferred from homology"/>
<accession>Q63GK3</accession>
<keyword id="KW-0460">Magnesium</keyword>
<keyword id="KW-0479">Metal-binding</keyword>
<keyword id="KW-0784">Thiamine biosynthesis</keyword>
<keyword id="KW-0808">Transferase</keyword>
<gene>
    <name evidence="1" type="primary">thiE</name>
    <name type="ordered locus">BCE33L0349</name>
</gene>
<reference key="1">
    <citation type="journal article" date="2006" name="J. Bacteriol.">
        <title>Pathogenomic sequence analysis of Bacillus cereus and Bacillus thuringiensis isolates closely related to Bacillus anthracis.</title>
        <authorList>
            <person name="Han C.S."/>
            <person name="Xie G."/>
            <person name="Challacombe J.F."/>
            <person name="Altherr M.R."/>
            <person name="Bhotika S.S."/>
            <person name="Bruce D."/>
            <person name="Campbell C.S."/>
            <person name="Campbell M.L."/>
            <person name="Chen J."/>
            <person name="Chertkov O."/>
            <person name="Cleland C."/>
            <person name="Dimitrijevic M."/>
            <person name="Doggett N.A."/>
            <person name="Fawcett J.J."/>
            <person name="Glavina T."/>
            <person name="Goodwin L.A."/>
            <person name="Hill K.K."/>
            <person name="Hitchcock P."/>
            <person name="Jackson P.J."/>
            <person name="Keim P."/>
            <person name="Kewalramani A.R."/>
            <person name="Longmire J."/>
            <person name="Lucas S."/>
            <person name="Malfatti S."/>
            <person name="McMurry K."/>
            <person name="Meincke L.J."/>
            <person name="Misra M."/>
            <person name="Moseman B.L."/>
            <person name="Mundt M."/>
            <person name="Munk A.C."/>
            <person name="Okinaka R.T."/>
            <person name="Parson-Quintana B."/>
            <person name="Reilly L.P."/>
            <person name="Richardson P."/>
            <person name="Robinson D.L."/>
            <person name="Rubin E."/>
            <person name="Saunders E."/>
            <person name="Tapia R."/>
            <person name="Tesmer J.G."/>
            <person name="Thayer N."/>
            <person name="Thompson L.S."/>
            <person name="Tice H."/>
            <person name="Ticknor L.O."/>
            <person name="Wills P.L."/>
            <person name="Brettin T.S."/>
            <person name="Gilna P."/>
        </authorList>
    </citation>
    <scope>NUCLEOTIDE SEQUENCE [LARGE SCALE GENOMIC DNA]</scope>
    <source>
        <strain>ZK / E33L</strain>
    </source>
</reference>
<dbReference type="EC" id="2.5.1.3" evidence="1"/>
<dbReference type="EMBL" id="CP000001">
    <property type="protein sequence ID" value="AAU19890.1"/>
    <property type="molecule type" value="Genomic_DNA"/>
</dbReference>
<dbReference type="RefSeq" id="WP_000086978.1">
    <property type="nucleotide sequence ID" value="NZ_CP009968.1"/>
</dbReference>
<dbReference type="SMR" id="Q63GK3"/>
<dbReference type="KEGG" id="bcz:BCE33L0349"/>
<dbReference type="PATRIC" id="fig|288681.22.peg.5254"/>
<dbReference type="UniPathway" id="UPA00060">
    <property type="reaction ID" value="UER00141"/>
</dbReference>
<dbReference type="Proteomes" id="UP000002612">
    <property type="component" value="Chromosome"/>
</dbReference>
<dbReference type="GO" id="GO:0005737">
    <property type="term" value="C:cytoplasm"/>
    <property type="evidence" value="ECO:0007669"/>
    <property type="project" value="TreeGrafter"/>
</dbReference>
<dbReference type="GO" id="GO:0000287">
    <property type="term" value="F:magnesium ion binding"/>
    <property type="evidence" value="ECO:0007669"/>
    <property type="project" value="UniProtKB-UniRule"/>
</dbReference>
<dbReference type="GO" id="GO:0004789">
    <property type="term" value="F:thiamine-phosphate diphosphorylase activity"/>
    <property type="evidence" value="ECO:0007669"/>
    <property type="project" value="UniProtKB-UniRule"/>
</dbReference>
<dbReference type="GO" id="GO:0009228">
    <property type="term" value="P:thiamine biosynthetic process"/>
    <property type="evidence" value="ECO:0007669"/>
    <property type="project" value="UniProtKB-KW"/>
</dbReference>
<dbReference type="GO" id="GO:0009229">
    <property type="term" value="P:thiamine diphosphate biosynthetic process"/>
    <property type="evidence" value="ECO:0007669"/>
    <property type="project" value="UniProtKB-UniRule"/>
</dbReference>
<dbReference type="CDD" id="cd00564">
    <property type="entry name" value="TMP_TenI"/>
    <property type="match status" value="1"/>
</dbReference>
<dbReference type="FunFam" id="3.20.20.70:FF:000096">
    <property type="entry name" value="Thiamine-phosphate synthase"/>
    <property type="match status" value="1"/>
</dbReference>
<dbReference type="Gene3D" id="3.20.20.70">
    <property type="entry name" value="Aldolase class I"/>
    <property type="match status" value="1"/>
</dbReference>
<dbReference type="HAMAP" id="MF_00097">
    <property type="entry name" value="TMP_synthase"/>
    <property type="match status" value="1"/>
</dbReference>
<dbReference type="InterPro" id="IPR013785">
    <property type="entry name" value="Aldolase_TIM"/>
</dbReference>
<dbReference type="InterPro" id="IPR036206">
    <property type="entry name" value="ThiamineP_synth_sf"/>
</dbReference>
<dbReference type="InterPro" id="IPR022998">
    <property type="entry name" value="ThiamineP_synth_TenI"/>
</dbReference>
<dbReference type="InterPro" id="IPR034291">
    <property type="entry name" value="TMP_synthase"/>
</dbReference>
<dbReference type="NCBIfam" id="TIGR00693">
    <property type="entry name" value="thiE"/>
    <property type="match status" value="1"/>
</dbReference>
<dbReference type="PANTHER" id="PTHR20857">
    <property type="entry name" value="THIAMINE-PHOSPHATE PYROPHOSPHORYLASE"/>
    <property type="match status" value="1"/>
</dbReference>
<dbReference type="PANTHER" id="PTHR20857:SF15">
    <property type="entry name" value="THIAMINE-PHOSPHATE SYNTHASE"/>
    <property type="match status" value="1"/>
</dbReference>
<dbReference type="Pfam" id="PF02581">
    <property type="entry name" value="TMP-TENI"/>
    <property type="match status" value="1"/>
</dbReference>
<dbReference type="SUPFAM" id="SSF51391">
    <property type="entry name" value="Thiamin phosphate synthase"/>
    <property type="match status" value="1"/>
</dbReference>
<evidence type="ECO:0000255" key="1">
    <source>
        <dbReference type="HAMAP-Rule" id="MF_00097"/>
    </source>
</evidence>
<organism>
    <name type="scientific">Bacillus cereus (strain ZK / E33L)</name>
    <dbReference type="NCBI Taxonomy" id="288681"/>
    <lineage>
        <taxon>Bacteria</taxon>
        <taxon>Bacillati</taxon>
        <taxon>Bacillota</taxon>
        <taxon>Bacilli</taxon>
        <taxon>Bacillales</taxon>
        <taxon>Bacillaceae</taxon>
        <taxon>Bacillus</taxon>
        <taxon>Bacillus cereus group</taxon>
    </lineage>
</organism>
<protein>
    <recommendedName>
        <fullName evidence="1">Thiamine-phosphate synthase</fullName>
        <shortName evidence="1">TP synthase</shortName>
        <shortName evidence="1">TPS</shortName>
        <ecNumber evidence="1">2.5.1.3</ecNumber>
    </recommendedName>
    <alternativeName>
        <fullName evidence="1">Thiamine-phosphate pyrophosphorylase</fullName>
        <shortName evidence="1">TMP pyrophosphorylase</shortName>
        <shortName evidence="1">TMP-PPase</shortName>
    </alternativeName>
</protein>